<feature type="chain" id="PRO_1000009256" description="UPF0102 protein Sbal_4100">
    <location>
        <begin position="1"/>
        <end position="108"/>
    </location>
</feature>
<evidence type="ECO:0000255" key="1">
    <source>
        <dbReference type="HAMAP-Rule" id="MF_00048"/>
    </source>
</evidence>
<keyword id="KW-1185">Reference proteome</keyword>
<organism>
    <name type="scientific">Shewanella baltica (strain OS155 / ATCC BAA-1091)</name>
    <dbReference type="NCBI Taxonomy" id="325240"/>
    <lineage>
        <taxon>Bacteria</taxon>
        <taxon>Pseudomonadati</taxon>
        <taxon>Pseudomonadota</taxon>
        <taxon>Gammaproteobacteria</taxon>
        <taxon>Alteromonadales</taxon>
        <taxon>Shewanellaceae</taxon>
        <taxon>Shewanella</taxon>
    </lineage>
</organism>
<comment type="similarity">
    <text evidence="1">Belongs to the UPF0102 family.</text>
</comment>
<proteinExistence type="inferred from homology"/>
<reference key="1">
    <citation type="submission" date="2007-02" db="EMBL/GenBank/DDBJ databases">
        <title>Complete sequence of chromosome of Shewanella baltica OS155.</title>
        <authorList>
            <consortium name="US DOE Joint Genome Institute"/>
            <person name="Copeland A."/>
            <person name="Lucas S."/>
            <person name="Lapidus A."/>
            <person name="Barry K."/>
            <person name="Detter J.C."/>
            <person name="Glavina del Rio T."/>
            <person name="Hammon N."/>
            <person name="Israni S."/>
            <person name="Dalin E."/>
            <person name="Tice H."/>
            <person name="Pitluck S."/>
            <person name="Sims D.R."/>
            <person name="Brettin T."/>
            <person name="Bruce D."/>
            <person name="Han C."/>
            <person name="Tapia R."/>
            <person name="Brainard J."/>
            <person name="Schmutz J."/>
            <person name="Larimer F."/>
            <person name="Land M."/>
            <person name="Hauser L."/>
            <person name="Kyrpides N."/>
            <person name="Mikhailova N."/>
            <person name="Brettar I."/>
            <person name="Klappenbach J."/>
            <person name="Konstantinidis K."/>
            <person name="Rodrigues J."/>
            <person name="Tiedje J."/>
            <person name="Richardson P."/>
        </authorList>
    </citation>
    <scope>NUCLEOTIDE SEQUENCE [LARGE SCALE GENOMIC DNA]</scope>
    <source>
        <strain>OS155 / ATCC BAA-1091</strain>
    </source>
</reference>
<name>Y4100_SHEB5</name>
<protein>
    <recommendedName>
        <fullName evidence="1">UPF0102 protein Sbal_4100</fullName>
    </recommendedName>
</protein>
<sequence>MTLGQQAEAHAQRYLEQQGLTFVERNVRYPFGEIDLIMRHKSHWVFVEVKYRSATQYGGALQALSAAQITRIRKAANHYLQLNRLDVPCRFDVIAMEADQIHWLVDAF</sequence>
<dbReference type="EMBL" id="CP000563">
    <property type="protein sequence ID" value="ABN63565.1"/>
    <property type="molecule type" value="Genomic_DNA"/>
</dbReference>
<dbReference type="RefSeq" id="WP_006084496.1">
    <property type="nucleotide sequence ID" value="NC_009052.1"/>
</dbReference>
<dbReference type="SMR" id="A3DA02"/>
<dbReference type="STRING" id="325240.Sbal_4100"/>
<dbReference type="KEGG" id="sbl:Sbal_4100"/>
<dbReference type="HOGENOM" id="CLU_115353_1_1_6"/>
<dbReference type="OrthoDB" id="9794876at2"/>
<dbReference type="Proteomes" id="UP000001557">
    <property type="component" value="Chromosome"/>
</dbReference>
<dbReference type="GO" id="GO:0003676">
    <property type="term" value="F:nucleic acid binding"/>
    <property type="evidence" value="ECO:0007669"/>
    <property type="project" value="InterPro"/>
</dbReference>
<dbReference type="CDD" id="cd20736">
    <property type="entry name" value="PoNe_Nuclease"/>
    <property type="match status" value="1"/>
</dbReference>
<dbReference type="Gene3D" id="3.40.1350.10">
    <property type="match status" value="1"/>
</dbReference>
<dbReference type="HAMAP" id="MF_00048">
    <property type="entry name" value="UPF0102"/>
    <property type="match status" value="1"/>
</dbReference>
<dbReference type="InterPro" id="IPR011335">
    <property type="entry name" value="Restrct_endonuc-II-like"/>
</dbReference>
<dbReference type="InterPro" id="IPR011856">
    <property type="entry name" value="tRNA_endonuc-like_dom_sf"/>
</dbReference>
<dbReference type="InterPro" id="IPR003509">
    <property type="entry name" value="UPF0102_YraN-like"/>
</dbReference>
<dbReference type="NCBIfam" id="NF009150">
    <property type="entry name" value="PRK12497.1-3"/>
    <property type="match status" value="1"/>
</dbReference>
<dbReference type="NCBIfam" id="TIGR00252">
    <property type="entry name" value="YraN family protein"/>
    <property type="match status" value="1"/>
</dbReference>
<dbReference type="PANTHER" id="PTHR34039">
    <property type="entry name" value="UPF0102 PROTEIN YRAN"/>
    <property type="match status" value="1"/>
</dbReference>
<dbReference type="PANTHER" id="PTHR34039:SF1">
    <property type="entry name" value="UPF0102 PROTEIN YRAN"/>
    <property type="match status" value="1"/>
</dbReference>
<dbReference type="Pfam" id="PF02021">
    <property type="entry name" value="UPF0102"/>
    <property type="match status" value="1"/>
</dbReference>
<dbReference type="SUPFAM" id="SSF52980">
    <property type="entry name" value="Restriction endonuclease-like"/>
    <property type="match status" value="1"/>
</dbReference>
<gene>
    <name type="ordered locus">Sbal_4100</name>
</gene>
<accession>A3DA02</accession>